<comment type="function">
    <text evidence="1">May regulate AMPA receptor content at nascent synapses, and have a role in postsynaptic development and maturation.</text>
</comment>
<comment type="subunit">
    <text evidence="1">Homodimer. Interacts with GRIA1 and GRIA2 (By similarity).</text>
</comment>
<comment type="interaction">
    <interactant intactId="EBI-726331">
        <id>Q9H7V2</id>
    </interactant>
    <interactant intactId="EBI-13059134">
        <id>Q13520</id>
        <label>AQP6</label>
    </interactant>
    <organismsDiffer>false</organismsDiffer>
    <experiments>3</experiments>
</comment>
<comment type="interaction">
    <interactant intactId="EBI-726331">
        <id>Q9H7V2</id>
    </interactant>
    <interactant intactId="EBI-18535450">
        <id>Q9GZR5</id>
        <label>ELOVL4</label>
    </interactant>
    <organismsDiffer>false</organismsDiffer>
    <experiments>3</experiments>
</comment>
<comment type="interaction">
    <interactant intactId="EBI-726331">
        <id>Q9H7V2</id>
    </interactant>
    <interactant intactId="EBI-743099">
        <id>Q969F0</id>
        <label>FATE1</label>
    </interactant>
    <organismsDiffer>false</organismsDiffer>
    <experiments>6</experiments>
</comment>
<comment type="interaction">
    <interactant intactId="EBI-726331">
        <id>Q9H7V2</id>
    </interactant>
    <interactant intactId="EBI-2833872">
        <id>O15552</id>
        <label>FFAR2</label>
    </interactant>
    <organismsDiffer>false</organismsDiffer>
    <experiments>3</experiments>
</comment>
<comment type="interaction">
    <interactant intactId="EBI-726331">
        <id>Q9H7V2</id>
    </interactant>
    <interactant intactId="EBI-18076404">
        <id>O15529</id>
        <label>GPR42</label>
    </interactant>
    <organismsDiffer>false</organismsDiffer>
    <experiments>3</experiments>
</comment>
<comment type="interaction">
    <interactant intactId="EBI-726331">
        <id>Q9H7V2</id>
    </interactant>
    <interactant intactId="EBI-13067820">
        <id>Q9NZD1</id>
        <label>GPRC5D</label>
    </interactant>
    <organismsDiffer>false</organismsDiffer>
    <experiments>3</experiments>
</comment>
<comment type="interaction">
    <interactant intactId="EBI-726331">
        <id>Q9H7V2</id>
    </interactant>
    <interactant intactId="EBI-750776">
        <id>O95214</id>
        <label>LEPROTL1</label>
    </interactant>
    <organismsDiffer>false</organismsDiffer>
    <experiments>3</experiments>
</comment>
<comment type="interaction">
    <interactant intactId="EBI-726331">
        <id>Q9H7V2</id>
    </interactant>
    <interactant intactId="EBI-3932027">
        <id>P21145</id>
        <label>MAL</label>
    </interactant>
    <organismsDiffer>false</organismsDiffer>
    <experiments>3</experiments>
</comment>
<comment type="interaction">
    <interactant intactId="EBI-726331">
        <id>Q9H7V2</id>
    </interactant>
    <interactant intactId="EBI-2858252">
        <id>Q6ZSS7</id>
        <label>MFSD6</label>
    </interactant>
    <organismsDiffer>false</organismsDiffer>
    <experiments>3</experiments>
</comment>
<comment type="interaction">
    <interactant intactId="EBI-726331">
        <id>Q9H7V2</id>
    </interactant>
    <interactant intactId="EBI-12243266">
        <id>Q7RTY0</id>
        <label>SLC16A13</label>
    </interactant>
    <organismsDiffer>false</organismsDiffer>
    <experiments>3</experiments>
</comment>
<comment type="interaction">
    <interactant intactId="EBI-726331">
        <id>Q9H7V2</id>
    </interactant>
    <interactant intactId="EBI-17295964">
        <id>Q9NQQ7-3</id>
        <label>SLC35C2</label>
    </interactant>
    <organismsDiffer>false</organismsDiffer>
    <experiments>3</experiments>
</comment>
<comment type="interaction">
    <interactant intactId="EBI-726331">
        <id>Q9H7V2</id>
    </interactant>
    <interactant intactId="EBI-12266234">
        <id>Q8IVJ1</id>
        <label>SLC41A1</label>
    </interactant>
    <organismsDiffer>false</organismsDiffer>
    <experiments>3</experiments>
</comment>
<comment type="interaction">
    <interactant intactId="EBI-726331">
        <id>Q9H7V2</id>
    </interactant>
    <interactant intactId="EBI-12947623">
        <id>Q96MV1</id>
        <label>TLCD4</label>
    </interactant>
    <organismsDiffer>false</organismsDiffer>
    <experiments>3</experiments>
</comment>
<comment type="interaction">
    <interactant intactId="EBI-726331">
        <id>Q9H7V2</id>
    </interactant>
    <interactant intactId="EBI-721293">
        <id>Q9BTV4</id>
        <label>TMEM43</label>
    </interactant>
    <organismsDiffer>false</organismsDiffer>
    <experiments>3</experiments>
</comment>
<comment type="interaction">
    <interactant intactId="EBI-726331">
        <id>Q9H7V2</id>
    </interactant>
    <interactant intactId="EBI-4401271">
        <id>Q9H1C4</id>
        <label>UNC93B1</label>
    </interactant>
    <organismsDiffer>false</organismsDiffer>
    <experiments>3</experiments>
</comment>
<comment type="subcellular location">
    <subcellularLocation>
        <location>Cell membrane</location>
        <topology>Single-pass type II membrane protein</topology>
    </subcellularLocation>
    <subcellularLocation>
        <location evidence="1">Early endosome membrane</location>
        <topology evidence="1">Single-pass type II membrane protein</topology>
    </subcellularLocation>
    <subcellularLocation>
        <location evidence="1">Postsynaptic density membrane</location>
    </subcellularLocation>
    <subcellularLocation>
        <location evidence="1">Synapse</location>
    </subcellularLocation>
    <subcellularLocation>
        <location evidence="1">Cell projection</location>
        <location evidence="1">Dendrite</location>
    </subcellularLocation>
    <subcellularLocation>
        <location evidence="1">Cell projection</location>
        <location evidence="1">Dendritic spine</location>
    </subcellularLocation>
    <text evidence="1">Shuttles between the cell surface and early endosome membrane.</text>
</comment>
<comment type="similarity">
    <text evidence="4">Belongs to the CD225/Dispanin family.</text>
</comment>
<gene>
    <name type="primary">SYNDIG1</name>
    <name type="synonym">C20orf39</name>
    <name type="synonym">TMEM90B</name>
</gene>
<protein>
    <recommendedName>
        <fullName>Synapse differentiation-inducing gene protein 1</fullName>
        <shortName>SynDIG1</shortName>
    </recommendedName>
    <alternativeName>
        <fullName>Dispanin subfamily C member 2</fullName>
        <shortName>DSPC2</shortName>
    </alternativeName>
    <alternativeName>
        <fullName>Transmembrane protein 90B</fullName>
    </alternativeName>
</protein>
<keyword id="KW-1003">Cell membrane</keyword>
<keyword id="KW-0966">Cell projection</keyword>
<keyword id="KW-0967">Endosome</keyword>
<keyword id="KW-0472">Membrane</keyword>
<keyword id="KW-0597">Phosphoprotein</keyword>
<keyword id="KW-0628">Postsynaptic cell membrane</keyword>
<keyword id="KW-1267">Proteomics identification</keyword>
<keyword id="KW-1185">Reference proteome</keyword>
<keyword id="KW-0735">Signal-anchor</keyword>
<keyword id="KW-0770">Synapse</keyword>
<keyword id="KW-0812">Transmembrane</keyword>
<keyword id="KW-1133">Transmembrane helix</keyword>
<organism>
    <name type="scientific">Homo sapiens</name>
    <name type="common">Human</name>
    <dbReference type="NCBI Taxonomy" id="9606"/>
    <lineage>
        <taxon>Eukaryota</taxon>
        <taxon>Metazoa</taxon>
        <taxon>Chordata</taxon>
        <taxon>Craniata</taxon>
        <taxon>Vertebrata</taxon>
        <taxon>Euteleostomi</taxon>
        <taxon>Mammalia</taxon>
        <taxon>Eutheria</taxon>
        <taxon>Euarchontoglires</taxon>
        <taxon>Primates</taxon>
        <taxon>Haplorrhini</taxon>
        <taxon>Catarrhini</taxon>
        <taxon>Hominidae</taxon>
        <taxon>Homo</taxon>
    </lineage>
</organism>
<evidence type="ECO:0000250" key="1"/>
<evidence type="ECO:0000250" key="2">
    <source>
        <dbReference type="UniProtKB" id="Q58DZ9"/>
    </source>
</evidence>
<evidence type="ECO:0000255" key="3"/>
<evidence type="ECO:0000305" key="4"/>
<feature type="chain" id="PRO_0000135696" description="Synapse differentiation-inducing gene protein 1">
    <location>
        <begin position="1"/>
        <end position="258"/>
    </location>
</feature>
<feature type="topological domain" description="Cytoplasmic" evidence="3">
    <location>
        <begin position="1"/>
        <end position="181"/>
    </location>
</feature>
<feature type="transmembrane region" description="Helical" evidence="3">
    <location>
        <begin position="182"/>
        <end position="202"/>
    </location>
</feature>
<feature type="topological domain" description="Extracellular" evidence="3">
    <location>
        <begin position="203"/>
        <end position="228"/>
    </location>
</feature>
<feature type="intramembrane region" description="Helical" evidence="3">
    <location>
        <begin position="229"/>
        <end position="249"/>
    </location>
</feature>
<feature type="topological domain" description="Extracellular" evidence="3">
    <location>
        <begin position="250"/>
        <end position="258"/>
    </location>
</feature>
<feature type="modified residue" description="Phosphoserine" evidence="2">
    <location>
        <position position="137"/>
    </location>
</feature>
<feature type="sequence variant" id="VAR_053733" description="In dbSNP:rs6083553.">
    <original>G</original>
    <variation>R</variation>
    <location>
        <position position="54"/>
    </location>
</feature>
<accession>Q9H7V2</accession>
<accession>Q6IA30</accession>
<accession>Q9H514</accession>
<proteinExistence type="evidence at protein level"/>
<name>SYNG1_HUMAN</name>
<dbReference type="EMBL" id="AK024282">
    <property type="protein sequence ID" value="BAB14872.1"/>
    <property type="molecule type" value="mRNA"/>
</dbReference>
<dbReference type="EMBL" id="CR457325">
    <property type="protein sequence ID" value="CAG33606.1"/>
    <property type="molecule type" value="mRNA"/>
</dbReference>
<dbReference type="EMBL" id="AL049594">
    <property type="status" value="NOT_ANNOTATED_CDS"/>
    <property type="molecule type" value="Genomic_DNA"/>
</dbReference>
<dbReference type="EMBL" id="AL157413">
    <property type="status" value="NOT_ANNOTATED_CDS"/>
    <property type="molecule type" value="Genomic_DNA"/>
</dbReference>
<dbReference type="EMBL" id="BC030637">
    <property type="protein sequence ID" value="AAH30637.1"/>
    <property type="molecule type" value="mRNA"/>
</dbReference>
<dbReference type="CCDS" id="CCDS13164.1"/>
<dbReference type="RefSeq" id="NP_001310535.1">
    <property type="nucleotide sequence ID" value="NM_001323606.2"/>
</dbReference>
<dbReference type="RefSeq" id="NP_001310536.1">
    <property type="nucleotide sequence ID" value="NM_001323607.2"/>
</dbReference>
<dbReference type="RefSeq" id="NP_079169.1">
    <property type="nucleotide sequence ID" value="NM_024893.3"/>
</dbReference>
<dbReference type="RefSeq" id="XP_016883554.1">
    <property type="nucleotide sequence ID" value="XM_017028065.2"/>
</dbReference>
<dbReference type="RefSeq" id="XP_016883555.1">
    <property type="nucleotide sequence ID" value="XM_017028066.3"/>
</dbReference>
<dbReference type="RefSeq" id="XP_016883556.1">
    <property type="nucleotide sequence ID" value="XM_017028067.3"/>
</dbReference>
<dbReference type="RefSeq" id="XP_016883557.1">
    <property type="nucleotide sequence ID" value="XM_017028068.2"/>
</dbReference>
<dbReference type="RefSeq" id="XP_054180001.1">
    <property type="nucleotide sequence ID" value="XM_054324026.1"/>
</dbReference>
<dbReference type="RefSeq" id="XP_054180002.1">
    <property type="nucleotide sequence ID" value="XM_054324027.1"/>
</dbReference>
<dbReference type="RefSeq" id="XP_054180003.1">
    <property type="nucleotide sequence ID" value="XM_054324028.1"/>
</dbReference>
<dbReference type="RefSeq" id="XP_054180004.1">
    <property type="nucleotide sequence ID" value="XM_054324029.1"/>
</dbReference>
<dbReference type="SMR" id="Q9H7V2"/>
<dbReference type="BioGRID" id="123022">
    <property type="interactions" value="30"/>
</dbReference>
<dbReference type="FunCoup" id="Q9H7V2">
    <property type="interactions" value="38"/>
</dbReference>
<dbReference type="IntAct" id="Q9H7V2">
    <property type="interactions" value="17"/>
</dbReference>
<dbReference type="STRING" id="9606.ENSP00000366058"/>
<dbReference type="TCDB" id="8.A.58.2.13">
    <property type="family name" value="the dispanin (dispanin) family"/>
</dbReference>
<dbReference type="iPTMnet" id="Q9H7V2"/>
<dbReference type="PhosphoSitePlus" id="Q9H7V2"/>
<dbReference type="BioMuta" id="SYNDIG1"/>
<dbReference type="DMDM" id="23813901"/>
<dbReference type="MassIVE" id="Q9H7V2"/>
<dbReference type="PaxDb" id="9606-ENSP00000366058"/>
<dbReference type="PeptideAtlas" id="Q9H7V2"/>
<dbReference type="ProteomicsDB" id="81151"/>
<dbReference type="ABCD" id="Q9H7V2">
    <property type="antibodies" value="1 sequenced antibody"/>
</dbReference>
<dbReference type="Antibodypedia" id="62829">
    <property type="antibodies" value="36 antibodies from 14 providers"/>
</dbReference>
<dbReference type="DNASU" id="79953"/>
<dbReference type="Ensembl" id="ENST00000376862.4">
    <property type="protein sequence ID" value="ENSP00000366058.3"/>
    <property type="gene ID" value="ENSG00000101463.6"/>
</dbReference>
<dbReference type="GeneID" id="79953"/>
<dbReference type="KEGG" id="hsa:79953"/>
<dbReference type="MANE-Select" id="ENST00000376862.4">
    <property type="protein sequence ID" value="ENSP00000366058.3"/>
    <property type="RefSeq nucleotide sequence ID" value="NM_024893.3"/>
    <property type="RefSeq protein sequence ID" value="NP_079169.1"/>
</dbReference>
<dbReference type="UCSC" id="uc002wtw.3">
    <property type="organism name" value="human"/>
</dbReference>
<dbReference type="AGR" id="HGNC:15885"/>
<dbReference type="CTD" id="79953"/>
<dbReference type="DisGeNET" id="79953"/>
<dbReference type="GeneCards" id="SYNDIG1"/>
<dbReference type="HGNC" id="HGNC:15885">
    <property type="gene designation" value="SYNDIG1"/>
</dbReference>
<dbReference type="HPA" id="ENSG00000101463">
    <property type="expression patterns" value="Tissue enhanced (brain, heart muscle)"/>
</dbReference>
<dbReference type="MIM" id="614311">
    <property type="type" value="gene"/>
</dbReference>
<dbReference type="neXtProt" id="NX_Q9H7V2"/>
<dbReference type="OpenTargets" id="ENSG00000101463"/>
<dbReference type="PharmGKB" id="PA25752"/>
<dbReference type="VEuPathDB" id="HostDB:ENSG00000101463"/>
<dbReference type="eggNOG" id="ENOG502QQXK">
    <property type="taxonomic scope" value="Eukaryota"/>
</dbReference>
<dbReference type="GeneTree" id="ENSGT00950000183147"/>
<dbReference type="HOGENOM" id="CLU_094250_0_0_1"/>
<dbReference type="InParanoid" id="Q9H7V2"/>
<dbReference type="OMA" id="SWGDGMA"/>
<dbReference type="OrthoDB" id="8440917at2759"/>
<dbReference type="PAN-GO" id="Q9H7V2">
    <property type="GO annotations" value="6 GO annotations based on evolutionary models"/>
</dbReference>
<dbReference type="PhylomeDB" id="Q9H7V2"/>
<dbReference type="TreeFam" id="TF331357"/>
<dbReference type="PathwayCommons" id="Q9H7V2"/>
<dbReference type="SignaLink" id="Q9H7V2"/>
<dbReference type="BioGRID-ORCS" id="79953">
    <property type="hits" value="9 hits in 1141 CRISPR screens"/>
</dbReference>
<dbReference type="ChiTaRS" id="SYNDIG1">
    <property type="organism name" value="human"/>
</dbReference>
<dbReference type="GenomeRNAi" id="79953"/>
<dbReference type="Pharos" id="Q9H7V2">
    <property type="development level" value="Tdark"/>
</dbReference>
<dbReference type="PRO" id="PR:Q9H7V2"/>
<dbReference type="Proteomes" id="UP000005640">
    <property type="component" value="Chromosome 20"/>
</dbReference>
<dbReference type="RNAct" id="Q9H7V2">
    <property type="molecule type" value="protein"/>
</dbReference>
<dbReference type="Bgee" id="ENSG00000101463">
    <property type="expression patterns" value="Expressed in C1 segment of cervical spinal cord and 140 other cell types or tissues"/>
</dbReference>
<dbReference type="GO" id="GO:0044297">
    <property type="term" value="C:cell body"/>
    <property type="evidence" value="ECO:0000250"/>
    <property type="project" value="UniProtKB"/>
</dbReference>
<dbReference type="GO" id="GO:0043198">
    <property type="term" value="C:dendritic shaft"/>
    <property type="evidence" value="ECO:0000250"/>
    <property type="project" value="UniProtKB"/>
</dbReference>
<dbReference type="GO" id="GO:0043197">
    <property type="term" value="C:dendritic spine"/>
    <property type="evidence" value="ECO:0000250"/>
    <property type="project" value="UniProtKB"/>
</dbReference>
<dbReference type="GO" id="GO:0031901">
    <property type="term" value="C:early endosome membrane"/>
    <property type="evidence" value="ECO:0000250"/>
    <property type="project" value="UniProtKB"/>
</dbReference>
<dbReference type="GO" id="GO:0060076">
    <property type="term" value="C:excitatory synapse"/>
    <property type="evidence" value="ECO:0000250"/>
    <property type="project" value="UniProtKB"/>
</dbReference>
<dbReference type="GO" id="GO:0098978">
    <property type="term" value="C:glutamatergic synapse"/>
    <property type="evidence" value="ECO:0007669"/>
    <property type="project" value="Ensembl"/>
</dbReference>
<dbReference type="GO" id="GO:0043231">
    <property type="term" value="C:intracellular membrane-bounded organelle"/>
    <property type="evidence" value="ECO:0000314"/>
    <property type="project" value="HPA"/>
</dbReference>
<dbReference type="GO" id="GO:0005886">
    <property type="term" value="C:plasma membrane"/>
    <property type="evidence" value="ECO:0000250"/>
    <property type="project" value="UniProtKB"/>
</dbReference>
<dbReference type="GO" id="GO:0014069">
    <property type="term" value="C:postsynaptic density"/>
    <property type="evidence" value="ECO:0000250"/>
    <property type="project" value="UniProtKB"/>
</dbReference>
<dbReference type="GO" id="GO:0098839">
    <property type="term" value="C:postsynaptic density membrane"/>
    <property type="evidence" value="ECO:0000318"/>
    <property type="project" value="GO_Central"/>
</dbReference>
<dbReference type="GO" id="GO:0030672">
    <property type="term" value="C:synaptic vesicle membrane"/>
    <property type="evidence" value="ECO:0000318"/>
    <property type="project" value="GO_Central"/>
</dbReference>
<dbReference type="GO" id="GO:0035254">
    <property type="term" value="F:glutamate receptor binding"/>
    <property type="evidence" value="ECO:0000250"/>
    <property type="project" value="UniProtKB"/>
</dbReference>
<dbReference type="GO" id="GO:0042803">
    <property type="term" value="F:protein homodimerization activity"/>
    <property type="evidence" value="ECO:0000250"/>
    <property type="project" value="UniProtKB"/>
</dbReference>
<dbReference type="GO" id="GO:0006886">
    <property type="term" value="P:intracellular protein transport"/>
    <property type="evidence" value="ECO:0000250"/>
    <property type="project" value="UniProtKB"/>
</dbReference>
<dbReference type="GO" id="GO:0051965">
    <property type="term" value="P:positive regulation of synapse assembly"/>
    <property type="evidence" value="ECO:0000314"/>
    <property type="project" value="UniProtKB"/>
</dbReference>
<dbReference type="GO" id="GO:0150052">
    <property type="term" value="P:regulation of postsynapse assembly"/>
    <property type="evidence" value="ECO:0007669"/>
    <property type="project" value="Ensembl"/>
</dbReference>
<dbReference type="GO" id="GO:0097091">
    <property type="term" value="P:synaptic vesicle clustering"/>
    <property type="evidence" value="ECO:0000250"/>
    <property type="project" value="UniProtKB"/>
</dbReference>
<dbReference type="InterPro" id="IPR007593">
    <property type="entry name" value="CD225/Dispanin_fam"/>
</dbReference>
<dbReference type="PANTHER" id="PTHR14768:SF3">
    <property type="entry name" value="SYNAPSE DIFFERENTIATION-INDUCING GENE PROTEIN 1"/>
    <property type="match status" value="1"/>
</dbReference>
<dbReference type="PANTHER" id="PTHR14768">
    <property type="entry name" value="UPF0338 PROTEIN"/>
    <property type="match status" value="1"/>
</dbReference>
<dbReference type="Pfam" id="PF04505">
    <property type="entry name" value="CD225"/>
    <property type="match status" value="1"/>
</dbReference>
<sequence>MDGIIEQKSMLVHSKISDAGKRNGLINTRNLMAESRDGLVSVYPAPQYQSHRVGASTVPASLDSSRSEPMQQLLDPNTLQQSVESRYRPNIILYSEGVLRSWGDGVAADCCETTFIEDRSPTKDSLEYPDGKFIDLSADDIKIHTLSYDVEEEEEFQELESDYSSDTESEDNFLMMPPRDHLGLSVFSMLCCFWPLGIAAFYLSHETNKAVAKGDLHQASTSSRRALFLAVLSITIGTGVYVGVAVALIAYLSKNNHL</sequence>
<reference key="1">
    <citation type="journal article" date="2004" name="Nat. Genet.">
        <title>Complete sequencing and characterization of 21,243 full-length human cDNAs.</title>
        <authorList>
            <person name="Ota T."/>
            <person name="Suzuki Y."/>
            <person name="Nishikawa T."/>
            <person name="Otsuki T."/>
            <person name="Sugiyama T."/>
            <person name="Irie R."/>
            <person name="Wakamatsu A."/>
            <person name="Hayashi K."/>
            <person name="Sato H."/>
            <person name="Nagai K."/>
            <person name="Kimura K."/>
            <person name="Makita H."/>
            <person name="Sekine M."/>
            <person name="Obayashi M."/>
            <person name="Nishi T."/>
            <person name="Shibahara T."/>
            <person name="Tanaka T."/>
            <person name="Ishii S."/>
            <person name="Yamamoto J."/>
            <person name="Saito K."/>
            <person name="Kawai Y."/>
            <person name="Isono Y."/>
            <person name="Nakamura Y."/>
            <person name="Nagahari K."/>
            <person name="Murakami K."/>
            <person name="Yasuda T."/>
            <person name="Iwayanagi T."/>
            <person name="Wagatsuma M."/>
            <person name="Shiratori A."/>
            <person name="Sudo H."/>
            <person name="Hosoiri T."/>
            <person name="Kaku Y."/>
            <person name="Kodaira H."/>
            <person name="Kondo H."/>
            <person name="Sugawara M."/>
            <person name="Takahashi M."/>
            <person name="Kanda K."/>
            <person name="Yokoi T."/>
            <person name="Furuya T."/>
            <person name="Kikkawa E."/>
            <person name="Omura Y."/>
            <person name="Abe K."/>
            <person name="Kamihara K."/>
            <person name="Katsuta N."/>
            <person name="Sato K."/>
            <person name="Tanikawa M."/>
            <person name="Yamazaki M."/>
            <person name="Ninomiya K."/>
            <person name="Ishibashi T."/>
            <person name="Yamashita H."/>
            <person name="Murakawa K."/>
            <person name="Fujimori K."/>
            <person name="Tanai H."/>
            <person name="Kimata M."/>
            <person name="Watanabe M."/>
            <person name="Hiraoka S."/>
            <person name="Chiba Y."/>
            <person name="Ishida S."/>
            <person name="Ono Y."/>
            <person name="Takiguchi S."/>
            <person name="Watanabe S."/>
            <person name="Yosida M."/>
            <person name="Hotuta T."/>
            <person name="Kusano J."/>
            <person name="Kanehori K."/>
            <person name="Takahashi-Fujii A."/>
            <person name="Hara H."/>
            <person name="Tanase T.-O."/>
            <person name="Nomura Y."/>
            <person name="Togiya S."/>
            <person name="Komai F."/>
            <person name="Hara R."/>
            <person name="Takeuchi K."/>
            <person name="Arita M."/>
            <person name="Imose N."/>
            <person name="Musashino K."/>
            <person name="Yuuki H."/>
            <person name="Oshima A."/>
            <person name="Sasaki N."/>
            <person name="Aotsuka S."/>
            <person name="Yoshikawa Y."/>
            <person name="Matsunawa H."/>
            <person name="Ichihara T."/>
            <person name="Shiohata N."/>
            <person name="Sano S."/>
            <person name="Moriya S."/>
            <person name="Momiyama H."/>
            <person name="Satoh N."/>
            <person name="Takami S."/>
            <person name="Terashima Y."/>
            <person name="Suzuki O."/>
            <person name="Nakagawa S."/>
            <person name="Senoh A."/>
            <person name="Mizoguchi H."/>
            <person name="Goto Y."/>
            <person name="Shimizu F."/>
            <person name="Wakebe H."/>
            <person name="Hishigaki H."/>
            <person name="Watanabe T."/>
            <person name="Sugiyama A."/>
            <person name="Takemoto M."/>
            <person name="Kawakami B."/>
            <person name="Yamazaki M."/>
            <person name="Watanabe K."/>
            <person name="Kumagai A."/>
            <person name="Itakura S."/>
            <person name="Fukuzumi Y."/>
            <person name="Fujimori Y."/>
            <person name="Komiyama M."/>
            <person name="Tashiro H."/>
            <person name="Tanigami A."/>
            <person name="Fujiwara T."/>
            <person name="Ono T."/>
            <person name="Yamada K."/>
            <person name="Fujii Y."/>
            <person name="Ozaki K."/>
            <person name="Hirao M."/>
            <person name="Ohmori Y."/>
            <person name="Kawabata A."/>
            <person name="Hikiji T."/>
            <person name="Kobatake N."/>
            <person name="Inagaki H."/>
            <person name="Ikema Y."/>
            <person name="Okamoto S."/>
            <person name="Okitani R."/>
            <person name="Kawakami T."/>
            <person name="Noguchi S."/>
            <person name="Itoh T."/>
            <person name="Shigeta K."/>
            <person name="Senba T."/>
            <person name="Matsumura K."/>
            <person name="Nakajima Y."/>
            <person name="Mizuno T."/>
            <person name="Morinaga M."/>
            <person name="Sasaki M."/>
            <person name="Togashi T."/>
            <person name="Oyama M."/>
            <person name="Hata H."/>
            <person name="Watanabe M."/>
            <person name="Komatsu T."/>
            <person name="Mizushima-Sugano J."/>
            <person name="Satoh T."/>
            <person name="Shirai Y."/>
            <person name="Takahashi Y."/>
            <person name="Nakagawa K."/>
            <person name="Okumura K."/>
            <person name="Nagase T."/>
            <person name="Nomura N."/>
            <person name="Kikuchi H."/>
            <person name="Masuho Y."/>
            <person name="Yamashita R."/>
            <person name="Nakai K."/>
            <person name="Yada T."/>
            <person name="Nakamura Y."/>
            <person name="Ohara O."/>
            <person name="Isogai T."/>
            <person name="Sugano S."/>
        </authorList>
    </citation>
    <scope>NUCLEOTIDE SEQUENCE [LARGE SCALE MRNA]</scope>
</reference>
<reference key="2">
    <citation type="submission" date="2004-06" db="EMBL/GenBank/DDBJ databases">
        <title>Cloning of human full open reading frames in Gateway(TM) system entry vector (pDONR201).</title>
        <authorList>
            <person name="Ebert L."/>
            <person name="Schick M."/>
            <person name="Neubert P."/>
            <person name="Schatten R."/>
            <person name="Henze S."/>
            <person name="Korn B."/>
        </authorList>
    </citation>
    <scope>NUCLEOTIDE SEQUENCE [LARGE SCALE MRNA]</scope>
</reference>
<reference key="3">
    <citation type="journal article" date="2001" name="Nature">
        <title>The DNA sequence and comparative analysis of human chromosome 20.</title>
        <authorList>
            <person name="Deloukas P."/>
            <person name="Matthews L.H."/>
            <person name="Ashurst J.L."/>
            <person name="Burton J."/>
            <person name="Gilbert J.G.R."/>
            <person name="Jones M."/>
            <person name="Stavrides G."/>
            <person name="Almeida J.P."/>
            <person name="Babbage A.K."/>
            <person name="Bagguley C.L."/>
            <person name="Bailey J."/>
            <person name="Barlow K.F."/>
            <person name="Bates K.N."/>
            <person name="Beard L.M."/>
            <person name="Beare D.M."/>
            <person name="Beasley O.P."/>
            <person name="Bird C.P."/>
            <person name="Blakey S.E."/>
            <person name="Bridgeman A.M."/>
            <person name="Brown A.J."/>
            <person name="Buck D."/>
            <person name="Burrill W.D."/>
            <person name="Butler A.P."/>
            <person name="Carder C."/>
            <person name="Carter N.P."/>
            <person name="Chapman J.C."/>
            <person name="Clamp M."/>
            <person name="Clark G."/>
            <person name="Clark L.N."/>
            <person name="Clark S.Y."/>
            <person name="Clee C.M."/>
            <person name="Clegg S."/>
            <person name="Cobley V.E."/>
            <person name="Collier R.E."/>
            <person name="Connor R.E."/>
            <person name="Corby N.R."/>
            <person name="Coulson A."/>
            <person name="Coville G.J."/>
            <person name="Deadman R."/>
            <person name="Dhami P.D."/>
            <person name="Dunn M."/>
            <person name="Ellington A.G."/>
            <person name="Frankland J.A."/>
            <person name="Fraser A."/>
            <person name="French L."/>
            <person name="Garner P."/>
            <person name="Grafham D.V."/>
            <person name="Griffiths C."/>
            <person name="Griffiths M.N.D."/>
            <person name="Gwilliam R."/>
            <person name="Hall R.E."/>
            <person name="Hammond S."/>
            <person name="Harley J.L."/>
            <person name="Heath P.D."/>
            <person name="Ho S."/>
            <person name="Holden J.L."/>
            <person name="Howden P.J."/>
            <person name="Huckle E."/>
            <person name="Hunt A.R."/>
            <person name="Hunt S.E."/>
            <person name="Jekosch K."/>
            <person name="Johnson C.M."/>
            <person name="Johnson D."/>
            <person name="Kay M.P."/>
            <person name="Kimberley A.M."/>
            <person name="King A."/>
            <person name="Knights A."/>
            <person name="Laird G.K."/>
            <person name="Lawlor S."/>
            <person name="Lehvaeslaiho M.H."/>
            <person name="Leversha M.A."/>
            <person name="Lloyd C."/>
            <person name="Lloyd D.M."/>
            <person name="Lovell J.D."/>
            <person name="Marsh V.L."/>
            <person name="Martin S.L."/>
            <person name="McConnachie L.J."/>
            <person name="McLay K."/>
            <person name="McMurray A.A."/>
            <person name="Milne S.A."/>
            <person name="Mistry D."/>
            <person name="Moore M.J.F."/>
            <person name="Mullikin J.C."/>
            <person name="Nickerson T."/>
            <person name="Oliver K."/>
            <person name="Parker A."/>
            <person name="Patel R."/>
            <person name="Pearce T.A.V."/>
            <person name="Peck A.I."/>
            <person name="Phillimore B.J.C.T."/>
            <person name="Prathalingam S.R."/>
            <person name="Plumb R.W."/>
            <person name="Ramsay H."/>
            <person name="Rice C.M."/>
            <person name="Ross M.T."/>
            <person name="Scott C.E."/>
            <person name="Sehra H.K."/>
            <person name="Shownkeen R."/>
            <person name="Sims S."/>
            <person name="Skuce C.D."/>
            <person name="Smith M.L."/>
            <person name="Soderlund C."/>
            <person name="Steward C.A."/>
            <person name="Sulston J.E."/>
            <person name="Swann R.M."/>
            <person name="Sycamore N."/>
            <person name="Taylor R."/>
            <person name="Tee L."/>
            <person name="Thomas D.W."/>
            <person name="Thorpe A."/>
            <person name="Tracey A."/>
            <person name="Tromans A.C."/>
            <person name="Vaudin M."/>
            <person name="Wall M."/>
            <person name="Wallis J.M."/>
            <person name="Whitehead S.L."/>
            <person name="Whittaker P."/>
            <person name="Willey D.L."/>
            <person name="Williams L."/>
            <person name="Williams S.A."/>
            <person name="Wilming L."/>
            <person name="Wray P.W."/>
            <person name="Hubbard T."/>
            <person name="Durbin R.M."/>
            <person name="Bentley D.R."/>
            <person name="Beck S."/>
            <person name="Rogers J."/>
        </authorList>
    </citation>
    <scope>NUCLEOTIDE SEQUENCE [LARGE SCALE GENOMIC DNA]</scope>
</reference>
<reference key="4">
    <citation type="journal article" date="2004" name="Genome Res.">
        <title>The status, quality, and expansion of the NIH full-length cDNA project: the Mammalian Gene Collection (MGC).</title>
        <authorList>
            <consortium name="The MGC Project Team"/>
        </authorList>
    </citation>
    <scope>NUCLEOTIDE SEQUENCE [LARGE SCALE MRNA]</scope>
    <source>
        <tissue>Hippocampus</tissue>
    </source>
</reference>
<reference key="5">
    <citation type="journal article" date="2012" name="PLoS ONE">
        <title>The dispanins: a novel gene family of ancient origin that contains 14 human members.</title>
        <authorList>
            <person name="Sallman Almen M."/>
            <person name="Bringeland N."/>
            <person name="Fredriksson R."/>
            <person name="Schioth H.B."/>
        </authorList>
    </citation>
    <scope>GENE FAMILY</scope>
</reference>